<organism>
    <name type="scientific">Saccharomyces cerevisiae (strain ATCC 204508 / S288c)</name>
    <name type="common">Baker's yeast</name>
    <dbReference type="NCBI Taxonomy" id="559292"/>
    <lineage>
        <taxon>Eukaryota</taxon>
        <taxon>Fungi</taxon>
        <taxon>Dikarya</taxon>
        <taxon>Ascomycota</taxon>
        <taxon>Saccharomycotina</taxon>
        <taxon>Saccharomycetes</taxon>
        <taxon>Saccharomycetales</taxon>
        <taxon>Saccharomycetaceae</taxon>
        <taxon>Saccharomyces</taxon>
    </lineage>
</organism>
<evidence type="ECO:0000255" key="1"/>
<evidence type="ECO:0000305" key="2"/>
<sequence length="58" mass="6508">MESIFLHANITIIPHSVLYVSLSYYIINPCVSVSTNLDDYFSSFVSSSNTVYDNILVT</sequence>
<accession>P0C289</accession>
<accession>D6VS21</accession>
<keyword id="KW-0472">Membrane</keyword>
<keyword id="KW-1185">Reference proteome</keyword>
<keyword id="KW-0812">Transmembrane</keyword>
<keyword id="KW-1133">Transmembrane helix</keyword>
<dbReference type="EMBL" id="Z68196">
    <property type="status" value="NOT_ANNOTATED_CDS"/>
    <property type="molecule type" value="Genomic_DNA"/>
</dbReference>
<dbReference type="EMBL" id="BK006938">
    <property type="protein sequence ID" value="DAA11881.1"/>
    <property type="molecule type" value="Genomic_DNA"/>
</dbReference>
<dbReference type="RefSeq" id="NP_010318.1">
    <property type="nucleotide sequence ID" value="NM_001184326.1"/>
</dbReference>
<dbReference type="BioGRID" id="32087">
    <property type="interactions" value="9"/>
</dbReference>
<dbReference type="FunCoup" id="P0C289">
    <property type="interactions" value="38"/>
</dbReference>
<dbReference type="STRING" id="4932.YDR034C-A"/>
<dbReference type="PaxDb" id="4932-YDR034C-A"/>
<dbReference type="EnsemblFungi" id="YDR034C-A_mRNA">
    <property type="protein sequence ID" value="YDR034C-A"/>
    <property type="gene ID" value="YDR034C-A"/>
</dbReference>
<dbReference type="GeneID" id="851602"/>
<dbReference type="KEGG" id="sce:YDR034C-A"/>
<dbReference type="AGR" id="SGD:S000007233"/>
<dbReference type="SGD" id="S000007233">
    <property type="gene designation" value="YDR034C-A"/>
</dbReference>
<dbReference type="VEuPathDB" id="FungiDB:YDR034C-A"/>
<dbReference type="GeneTree" id="ENSGT00940000177947"/>
<dbReference type="HOGENOM" id="CLU_211159_0_0_1"/>
<dbReference type="InParanoid" id="P0C289"/>
<dbReference type="OrthoDB" id="10509916at2759"/>
<dbReference type="BioCyc" id="YEAST:G3O-30086-MONOMER"/>
<dbReference type="PRO" id="PR:P0C289"/>
<dbReference type="Proteomes" id="UP000002311">
    <property type="component" value="Chromosome IV"/>
</dbReference>
<dbReference type="RNAct" id="P0C289">
    <property type="molecule type" value="protein"/>
</dbReference>
<dbReference type="GO" id="GO:0016020">
    <property type="term" value="C:membrane"/>
    <property type="evidence" value="ECO:0007669"/>
    <property type="project" value="UniProtKB-SubCell"/>
</dbReference>
<proteinExistence type="predicted"/>
<protein>
    <recommendedName>
        <fullName>Putative uncharacterized protein YDR034C-A</fullName>
    </recommendedName>
</protein>
<comment type="subcellular location">
    <subcellularLocation>
        <location evidence="2">Membrane</location>
        <topology evidence="2">Single-pass membrane protein</topology>
    </subcellularLocation>
</comment>
<reference key="1">
    <citation type="journal article" date="1997" name="Nature">
        <title>The nucleotide sequence of Saccharomyces cerevisiae chromosome IV.</title>
        <authorList>
            <person name="Jacq C."/>
            <person name="Alt-Moerbe J."/>
            <person name="Andre B."/>
            <person name="Arnold W."/>
            <person name="Bahr A."/>
            <person name="Ballesta J.P.G."/>
            <person name="Bargues M."/>
            <person name="Baron L."/>
            <person name="Becker A."/>
            <person name="Biteau N."/>
            <person name="Bloecker H."/>
            <person name="Blugeon C."/>
            <person name="Boskovic J."/>
            <person name="Brandt P."/>
            <person name="Brueckner M."/>
            <person name="Buitrago M.J."/>
            <person name="Coster F."/>
            <person name="Delaveau T."/>
            <person name="del Rey F."/>
            <person name="Dujon B."/>
            <person name="Eide L.G."/>
            <person name="Garcia-Cantalejo J.M."/>
            <person name="Goffeau A."/>
            <person name="Gomez-Peris A."/>
            <person name="Granotier C."/>
            <person name="Hanemann V."/>
            <person name="Hankeln T."/>
            <person name="Hoheisel J.D."/>
            <person name="Jaeger W."/>
            <person name="Jimenez A."/>
            <person name="Jonniaux J.-L."/>
            <person name="Kraemer C."/>
            <person name="Kuester H."/>
            <person name="Laamanen P."/>
            <person name="Legros Y."/>
            <person name="Louis E.J."/>
            <person name="Moeller-Rieker S."/>
            <person name="Monnet A."/>
            <person name="Moro M."/>
            <person name="Mueller-Auer S."/>
            <person name="Nussbaumer B."/>
            <person name="Paricio N."/>
            <person name="Paulin L."/>
            <person name="Perea J."/>
            <person name="Perez-Alonso M."/>
            <person name="Perez-Ortin J.E."/>
            <person name="Pohl T.M."/>
            <person name="Prydz H."/>
            <person name="Purnelle B."/>
            <person name="Rasmussen S.W."/>
            <person name="Remacha M.A."/>
            <person name="Revuelta J.L."/>
            <person name="Rieger M."/>
            <person name="Salom D."/>
            <person name="Saluz H.P."/>
            <person name="Saiz J.E."/>
            <person name="Saren A.-M."/>
            <person name="Schaefer M."/>
            <person name="Scharfe M."/>
            <person name="Schmidt E.R."/>
            <person name="Schneider C."/>
            <person name="Scholler P."/>
            <person name="Schwarz S."/>
            <person name="Soler-Mira A."/>
            <person name="Urrestarazu L.A."/>
            <person name="Verhasselt P."/>
            <person name="Vissers S."/>
            <person name="Voet M."/>
            <person name="Volckaert G."/>
            <person name="Wagner G."/>
            <person name="Wambutt R."/>
            <person name="Wedler E."/>
            <person name="Wedler H."/>
            <person name="Woelfl S."/>
            <person name="Harris D.E."/>
            <person name="Bowman S."/>
            <person name="Brown D."/>
            <person name="Churcher C.M."/>
            <person name="Connor R."/>
            <person name="Dedman K."/>
            <person name="Gentles S."/>
            <person name="Hamlin N."/>
            <person name="Hunt S."/>
            <person name="Jones L."/>
            <person name="McDonald S."/>
            <person name="Murphy L.D."/>
            <person name="Niblett D."/>
            <person name="Odell C."/>
            <person name="Oliver K."/>
            <person name="Rajandream M.A."/>
            <person name="Richards C."/>
            <person name="Shore L."/>
            <person name="Walsh S.V."/>
            <person name="Barrell B.G."/>
            <person name="Dietrich F.S."/>
            <person name="Mulligan J.T."/>
            <person name="Allen E."/>
            <person name="Araujo R."/>
            <person name="Aviles E."/>
            <person name="Berno A."/>
            <person name="Carpenter J."/>
            <person name="Chen E."/>
            <person name="Cherry J.M."/>
            <person name="Chung E."/>
            <person name="Duncan M."/>
            <person name="Hunicke-Smith S."/>
            <person name="Hyman R.W."/>
            <person name="Komp C."/>
            <person name="Lashkari D."/>
            <person name="Lew H."/>
            <person name="Lin D."/>
            <person name="Mosedale D."/>
            <person name="Nakahara K."/>
            <person name="Namath A."/>
            <person name="Oefner P."/>
            <person name="Oh C."/>
            <person name="Petel F.X."/>
            <person name="Roberts D."/>
            <person name="Schramm S."/>
            <person name="Schroeder M."/>
            <person name="Shogren T."/>
            <person name="Shroff N."/>
            <person name="Winant A."/>
            <person name="Yelton M.A."/>
            <person name="Botstein D."/>
            <person name="Davis R.W."/>
            <person name="Johnston M."/>
            <person name="Andrews S."/>
            <person name="Brinkman R."/>
            <person name="Cooper J."/>
            <person name="Ding H."/>
            <person name="Du Z."/>
            <person name="Favello A."/>
            <person name="Fulton L."/>
            <person name="Gattung S."/>
            <person name="Greco T."/>
            <person name="Hallsworth K."/>
            <person name="Hawkins J."/>
            <person name="Hillier L.W."/>
            <person name="Jier M."/>
            <person name="Johnson D."/>
            <person name="Johnston L."/>
            <person name="Kirsten J."/>
            <person name="Kucaba T."/>
            <person name="Langston Y."/>
            <person name="Latreille P."/>
            <person name="Le T."/>
            <person name="Mardis E."/>
            <person name="Menezes S."/>
            <person name="Miller N."/>
            <person name="Nhan M."/>
            <person name="Pauley A."/>
            <person name="Peluso D."/>
            <person name="Rifkin L."/>
            <person name="Riles L."/>
            <person name="Taich A."/>
            <person name="Trevaskis E."/>
            <person name="Vignati D."/>
            <person name="Wilcox L."/>
            <person name="Wohldman P."/>
            <person name="Vaudin M."/>
            <person name="Wilson R."/>
            <person name="Waterston R."/>
            <person name="Albermann K."/>
            <person name="Hani J."/>
            <person name="Heumann K."/>
            <person name="Kleine K."/>
            <person name="Mewes H.-W."/>
            <person name="Zollner A."/>
            <person name="Zaccaria P."/>
        </authorList>
    </citation>
    <scope>NUCLEOTIDE SEQUENCE [LARGE SCALE GENOMIC DNA]</scope>
    <source>
        <strain>ATCC 204508 / S288c</strain>
    </source>
</reference>
<reference key="2">
    <citation type="journal article" date="2014" name="G3 (Bethesda)">
        <title>The reference genome sequence of Saccharomyces cerevisiae: Then and now.</title>
        <authorList>
            <person name="Engel S.R."/>
            <person name="Dietrich F.S."/>
            <person name="Fisk D.G."/>
            <person name="Binkley G."/>
            <person name="Balakrishnan R."/>
            <person name="Costanzo M.C."/>
            <person name="Dwight S.S."/>
            <person name="Hitz B.C."/>
            <person name="Karra K."/>
            <person name="Nash R.S."/>
            <person name="Weng S."/>
            <person name="Wong E.D."/>
            <person name="Lloyd P."/>
            <person name="Skrzypek M.S."/>
            <person name="Miyasato S.R."/>
            <person name="Simison M."/>
            <person name="Cherry J.M."/>
        </authorList>
    </citation>
    <scope>GENOME REANNOTATION</scope>
    <source>
        <strain>ATCC 204508 / S288c</strain>
    </source>
</reference>
<gene>
    <name type="ordered locus">YDR034C-A</name>
</gene>
<feature type="chain" id="PRO_0000269763" description="Putative uncharacterized protein YDR034C-A">
    <location>
        <begin position="1"/>
        <end position="58"/>
    </location>
</feature>
<feature type="transmembrane region" description="Helical" evidence="1">
    <location>
        <begin position="5"/>
        <end position="27"/>
    </location>
</feature>
<name>YD34A_YEAST</name>